<organism>
    <name type="scientific">Salmonella enteritidis PT4 (strain P125109)</name>
    <dbReference type="NCBI Taxonomy" id="550537"/>
    <lineage>
        <taxon>Bacteria</taxon>
        <taxon>Pseudomonadati</taxon>
        <taxon>Pseudomonadota</taxon>
        <taxon>Gammaproteobacteria</taxon>
        <taxon>Enterobacterales</taxon>
        <taxon>Enterobacteriaceae</taxon>
        <taxon>Salmonella</taxon>
    </lineage>
</organism>
<gene>
    <name evidence="1" type="primary">flgI</name>
    <name type="ordered locus">SEN1867</name>
</gene>
<dbReference type="EMBL" id="AM933172">
    <property type="protein sequence ID" value="CAR33447.1"/>
    <property type="molecule type" value="Genomic_DNA"/>
</dbReference>
<dbReference type="RefSeq" id="WP_001518955.1">
    <property type="nucleotide sequence ID" value="NC_011294.1"/>
</dbReference>
<dbReference type="SMR" id="B5QXY4"/>
<dbReference type="KEGG" id="set:SEN1867"/>
<dbReference type="HOGENOM" id="CLU_045235_1_0_6"/>
<dbReference type="Proteomes" id="UP000000613">
    <property type="component" value="Chromosome"/>
</dbReference>
<dbReference type="GO" id="GO:0009428">
    <property type="term" value="C:bacterial-type flagellum basal body, distal rod, P ring"/>
    <property type="evidence" value="ECO:0007669"/>
    <property type="project" value="InterPro"/>
</dbReference>
<dbReference type="GO" id="GO:0030288">
    <property type="term" value="C:outer membrane-bounded periplasmic space"/>
    <property type="evidence" value="ECO:0007669"/>
    <property type="project" value="InterPro"/>
</dbReference>
<dbReference type="GO" id="GO:0005198">
    <property type="term" value="F:structural molecule activity"/>
    <property type="evidence" value="ECO:0007669"/>
    <property type="project" value="InterPro"/>
</dbReference>
<dbReference type="GO" id="GO:0071973">
    <property type="term" value="P:bacterial-type flagellum-dependent cell motility"/>
    <property type="evidence" value="ECO:0007669"/>
    <property type="project" value="InterPro"/>
</dbReference>
<dbReference type="HAMAP" id="MF_00416">
    <property type="entry name" value="FlgI"/>
    <property type="match status" value="1"/>
</dbReference>
<dbReference type="InterPro" id="IPR001782">
    <property type="entry name" value="Flag_FlgI"/>
</dbReference>
<dbReference type="NCBIfam" id="NF003676">
    <property type="entry name" value="PRK05303.1"/>
    <property type="match status" value="1"/>
</dbReference>
<dbReference type="PANTHER" id="PTHR30381">
    <property type="entry name" value="FLAGELLAR P-RING PERIPLASMIC PROTEIN FLGI"/>
    <property type="match status" value="1"/>
</dbReference>
<dbReference type="PANTHER" id="PTHR30381:SF0">
    <property type="entry name" value="FLAGELLAR P-RING PROTEIN"/>
    <property type="match status" value="1"/>
</dbReference>
<dbReference type="Pfam" id="PF02119">
    <property type="entry name" value="FlgI"/>
    <property type="match status" value="1"/>
</dbReference>
<dbReference type="PRINTS" id="PR01010">
    <property type="entry name" value="FLGPRINGFLGI"/>
</dbReference>
<keyword id="KW-0975">Bacterial flagellum</keyword>
<keyword id="KW-0574">Periplasm</keyword>
<keyword id="KW-0732">Signal</keyword>
<evidence type="ECO:0000255" key="1">
    <source>
        <dbReference type="HAMAP-Rule" id="MF_00416"/>
    </source>
</evidence>
<name>FLGI_SALEP</name>
<reference key="1">
    <citation type="journal article" date="2008" name="Genome Res.">
        <title>Comparative genome analysis of Salmonella enteritidis PT4 and Salmonella gallinarum 287/91 provides insights into evolutionary and host adaptation pathways.</title>
        <authorList>
            <person name="Thomson N.R."/>
            <person name="Clayton D.J."/>
            <person name="Windhorst D."/>
            <person name="Vernikos G."/>
            <person name="Davidson S."/>
            <person name="Churcher C."/>
            <person name="Quail M.A."/>
            <person name="Stevens M."/>
            <person name="Jones M.A."/>
            <person name="Watson M."/>
            <person name="Barron A."/>
            <person name="Layton A."/>
            <person name="Pickard D."/>
            <person name="Kingsley R.A."/>
            <person name="Bignell A."/>
            <person name="Clark L."/>
            <person name="Harris B."/>
            <person name="Ormond D."/>
            <person name="Abdellah Z."/>
            <person name="Brooks K."/>
            <person name="Cherevach I."/>
            <person name="Chillingworth T."/>
            <person name="Woodward J."/>
            <person name="Norberczak H."/>
            <person name="Lord A."/>
            <person name="Arrowsmith C."/>
            <person name="Jagels K."/>
            <person name="Moule S."/>
            <person name="Mungall K."/>
            <person name="Saunders M."/>
            <person name="Whitehead S."/>
            <person name="Chabalgoity J.A."/>
            <person name="Maskell D."/>
            <person name="Humphreys T."/>
            <person name="Roberts M."/>
            <person name="Barrow P.A."/>
            <person name="Dougan G."/>
            <person name="Parkhill J."/>
        </authorList>
    </citation>
    <scope>NUCLEOTIDE SEQUENCE [LARGE SCALE GENOMIC DNA]</scope>
    <source>
        <strain>P125109</strain>
    </source>
</reference>
<proteinExistence type="inferred from homology"/>
<protein>
    <recommendedName>
        <fullName evidence="1">Flagellar P-ring protein</fullName>
    </recommendedName>
    <alternativeName>
        <fullName evidence="1">Basal body P-ring protein</fullName>
    </alternativeName>
</protein>
<comment type="function">
    <text evidence="1">Assembles around the rod to form the L-ring and probably protects the motor/basal body from shearing forces during rotation.</text>
</comment>
<comment type="subunit">
    <text evidence="1">The basal body constitutes a major portion of the flagellar organelle and consists of four rings (L,P,S, and M) mounted on a central rod.</text>
</comment>
<comment type="subcellular location">
    <subcellularLocation>
        <location evidence="1">Periplasm</location>
    </subcellularLocation>
    <subcellularLocation>
        <location evidence="1">Bacterial flagellum basal body</location>
    </subcellularLocation>
</comment>
<comment type="similarity">
    <text evidence="1">Belongs to the FlgI family.</text>
</comment>
<sequence length="365" mass="38168">MFKALAGIVLALVATLAHAERIRDLTSVQGVRENSLIGYGLVVGLDGTGDQTTQTPFTTQTLNNMLSQLGITVPTGTNMQLKNVAAVMVTASYPPFARQGQTIDVVVSSMGNAKSLRGGTLLMTPLKGVDSQVYALAQGNILVGGAGASAGGSSVQVNQLNGGRITNGAIIERELPTQFGAGNTINLQLNDEDFTMAQQITDAINRARGYGSATALDARTVQVRVPSGNSSQVRFLADIQNMEVNVTPQDAKVVINSRTGSVVMNREVTLDSCAVAQGNLSVTVNRQLNVNQPNTPFGGGQTVVTPQTQIDLRQSGGSLQSVRSSANLNSVVRALNALGATPMDLMSILQSMQSAGCLRAKLEII</sequence>
<feature type="signal peptide" evidence="1">
    <location>
        <begin position="1"/>
        <end position="19"/>
    </location>
</feature>
<feature type="chain" id="PRO_5000397422" description="Flagellar P-ring protein">
    <location>
        <begin position="20"/>
        <end position="365"/>
    </location>
</feature>
<accession>B5QXY4</accession>